<dbReference type="EMBL" id="Z28981">
    <property type="protein sequence ID" value="CAA82285.1"/>
    <property type="molecule type" value="Genomic_DNA"/>
</dbReference>
<dbReference type="PIR" id="S39317">
    <property type="entry name" value="S39317"/>
</dbReference>
<dbReference type="SMR" id="P35907"/>
<dbReference type="GO" id="GO:0005737">
    <property type="term" value="C:cytoplasm"/>
    <property type="evidence" value="ECO:0007669"/>
    <property type="project" value="UniProtKB-SubCell"/>
</dbReference>
<dbReference type="GO" id="GO:0005886">
    <property type="term" value="C:plasma membrane"/>
    <property type="evidence" value="ECO:0007669"/>
    <property type="project" value="TreeGrafter"/>
</dbReference>
<dbReference type="GO" id="GO:0005524">
    <property type="term" value="F:ATP binding"/>
    <property type="evidence" value="ECO:0007669"/>
    <property type="project" value="UniProtKB-KW"/>
</dbReference>
<dbReference type="GO" id="GO:0003688">
    <property type="term" value="F:DNA replication origin binding"/>
    <property type="evidence" value="ECO:0007669"/>
    <property type="project" value="TreeGrafter"/>
</dbReference>
<dbReference type="GO" id="GO:0008289">
    <property type="term" value="F:lipid binding"/>
    <property type="evidence" value="ECO:0007669"/>
    <property type="project" value="UniProtKB-KW"/>
</dbReference>
<dbReference type="GO" id="GO:0006270">
    <property type="term" value="P:DNA replication initiation"/>
    <property type="evidence" value="ECO:0007669"/>
    <property type="project" value="InterPro"/>
</dbReference>
<dbReference type="GO" id="GO:0006275">
    <property type="term" value="P:regulation of DNA replication"/>
    <property type="evidence" value="ECO:0007669"/>
    <property type="project" value="InterPro"/>
</dbReference>
<dbReference type="CDD" id="cd06571">
    <property type="entry name" value="Bac_DnaA_C"/>
    <property type="match status" value="1"/>
</dbReference>
<dbReference type="Gene3D" id="1.10.1750.10">
    <property type="match status" value="1"/>
</dbReference>
<dbReference type="Gene3D" id="1.10.8.60">
    <property type="match status" value="1"/>
</dbReference>
<dbReference type="Gene3D" id="3.40.50.300">
    <property type="entry name" value="P-loop containing nucleotide triphosphate hydrolases"/>
    <property type="match status" value="1"/>
</dbReference>
<dbReference type="InterPro" id="IPR020591">
    <property type="entry name" value="Chromosome_initiator_DnaA-like"/>
</dbReference>
<dbReference type="InterPro" id="IPR013159">
    <property type="entry name" value="DnaA_C"/>
</dbReference>
<dbReference type="InterPro" id="IPR013317">
    <property type="entry name" value="DnaA_dom"/>
</dbReference>
<dbReference type="InterPro" id="IPR027417">
    <property type="entry name" value="P-loop_NTPase"/>
</dbReference>
<dbReference type="InterPro" id="IPR010921">
    <property type="entry name" value="Trp_repressor/repl_initiator"/>
</dbReference>
<dbReference type="PANTHER" id="PTHR30050">
    <property type="entry name" value="CHROMOSOMAL REPLICATION INITIATOR PROTEIN DNAA"/>
    <property type="match status" value="1"/>
</dbReference>
<dbReference type="PANTHER" id="PTHR30050:SF2">
    <property type="entry name" value="CHROMOSOMAL REPLICATION INITIATOR PROTEIN DNAA"/>
    <property type="match status" value="1"/>
</dbReference>
<dbReference type="Pfam" id="PF00308">
    <property type="entry name" value="Bac_DnaA"/>
    <property type="match status" value="1"/>
</dbReference>
<dbReference type="Pfam" id="PF08299">
    <property type="entry name" value="Bac_DnaA_C"/>
    <property type="match status" value="1"/>
</dbReference>
<dbReference type="PRINTS" id="PR00051">
    <property type="entry name" value="DNAA"/>
</dbReference>
<dbReference type="SMART" id="SM00760">
    <property type="entry name" value="Bac_DnaA_C"/>
    <property type="match status" value="1"/>
</dbReference>
<dbReference type="SUPFAM" id="SSF52540">
    <property type="entry name" value="P-loop containing nucleoside triphosphate hydrolases"/>
    <property type="match status" value="1"/>
</dbReference>
<dbReference type="SUPFAM" id="SSF48295">
    <property type="entry name" value="TrpR-like"/>
    <property type="match status" value="1"/>
</dbReference>
<accession>P35907</accession>
<protein>
    <recommendedName>
        <fullName evidence="1">Chromosomal replication initiator protein DnaA</fullName>
    </recommendedName>
</protein>
<gene>
    <name evidence="1" type="primary">dnaA</name>
</gene>
<keyword id="KW-0067">ATP-binding</keyword>
<keyword id="KW-0963">Cytoplasm</keyword>
<keyword id="KW-0235">DNA replication</keyword>
<keyword id="KW-0238">DNA-binding</keyword>
<keyword id="KW-0446">Lipid-binding</keyword>
<keyword id="KW-0547">Nucleotide-binding</keyword>
<name>DNAA_WOLSP</name>
<reference key="1">
    <citation type="journal article" date="1994" name="Insect Mol. Biol.">
        <title>A prokaryotic dnaA sequence in Drosophila melanogaster: Wolbachia infection and cytoplasmic incompatibility among laboratory strains.</title>
        <authorList>
            <person name="Bourtzis K."/>
            <person name="Nirgianaki A."/>
            <person name="Onyango P."/>
            <person name="Savakis C."/>
        </authorList>
    </citation>
    <scope>NUCLEOTIDE SEQUENCE [GENOMIC DNA]</scope>
</reference>
<sequence length="186" mass="21283">EFFKTFNALIDQNKQLVISADRSPSDLDGVEERIKSRLGWGLVADINETTFELRLGILQAKVEQMNMYVPKDVLEFLARNIKSNIRELEGALNKVTHTSLIGRSMTVESASETLIDLLRSNHRSVTIEEIQKKVAEFFNIKVADMQSNRRLRSLARPRQIAMYFAKKFTQKSLPDIGRNFGGRDHT</sequence>
<evidence type="ECO:0000255" key="1">
    <source>
        <dbReference type="HAMAP-Rule" id="MF_00377"/>
    </source>
</evidence>
<proteinExistence type="inferred from homology"/>
<organism>
    <name type="scientific">Wolbachia sp</name>
    <dbReference type="NCBI Taxonomy" id="956"/>
    <lineage>
        <taxon>Bacteria</taxon>
        <taxon>Pseudomonadati</taxon>
        <taxon>Pseudomonadota</taxon>
        <taxon>Alphaproteobacteria</taxon>
        <taxon>Rickettsiales</taxon>
        <taxon>Anaplasmataceae</taxon>
        <taxon>Wolbachieae</taxon>
        <taxon>Wolbachia</taxon>
    </lineage>
</organism>
<comment type="function">
    <text evidence="1">Plays an essential role in the initiation and regulation of chromosomal replication. ATP-DnaA binds to the origin of replication (oriC) to initiate formation of the DNA replication initiation complex once per cell cycle. Binds the DnaA box (a 9 base pair repeat at the origin) and separates the double-stranded (ds)DNA. Forms a right-handed helical filament on oriC DNA; dsDNA binds to the exterior of the filament while single-stranded (ss)DNA is stabiized in the filament's interior. The ATP-DnaA-oriC complex binds and stabilizes one strand of the AT-rich DNA unwinding element (DUE), permitting loading of DNA polymerase. After initiation quickly degrades to an ADP-DnaA complex that is not apt for DNA replication. Binds acidic phospholipids.</text>
</comment>
<comment type="subunit">
    <text evidence="1">Oligomerizes as a right-handed, spiral filament on DNA at oriC.</text>
</comment>
<comment type="subcellular location">
    <subcellularLocation>
        <location evidence="1">Cytoplasm</location>
    </subcellularLocation>
</comment>
<comment type="domain">
    <text evidence="1">Domain I is involved in oligomerization and binding regulators, domain II is flexibile and of varying length in different bacteria, domain III forms the AAA+ region, while domain IV binds dsDNA.</text>
</comment>
<comment type="similarity">
    <text evidence="1">Belongs to the DnaA family.</text>
</comment>
<feature type="chain" id="PRO_0000114302" description="Chromosomal replication initiator protein DnaA">
    <location>
        <begin position="1" status="less than"/>
        <end position="186" status="greater than"/>
    </location>
</feature>
<feature type="region of interest" description="Domain III, AAA+ region" evidence="1">
    <location>
        <begin position="1"/>
        <end position="99"/>
    </location>
</feature>
<feature type="region of interest" description="Domain I, interacts with DnaA modulators" evidence="1">
    <location>
        <position position="1"/>
    </location>
</feature>
<feature type="region of interest" description="Domain II" evidence="1">
    <location>
        <position position="1"/>
    </location>
</feature>
<feature type="region of interest" description="Domain IV, binds dsDNA" evidence="1">
    <location>
        <begin position="100"/>
        <end position="186"/>
    </location>
</feature>
<feature type="non-terminal residue">
    <location>
        <position position="1"/>
    </location>
</feature>
<feature type="non-terminal residue">
    <location>
        <position position="186"/>
    </location>
</feature>